<reference key="1">
    <citation type="journal article" date="1995" name="FEMS Microbiol. Lett.">
        <title>Non-reciprocal regulation of Rhodobacter capsulatus and Rhodobacter sphaeroides recA genes expression.</title>
        <authorList>
            <person name="Fernandez de Henestrosa A.R."/>
            <person name="Rivera E."/>
            <person name="Barbe J."/>
        </authorList>
    </citation>
    <scope>NUCLEOTIDE SEQUENCE [GENOMIC DNA]</scope>
    <source>
        <strain>J50</strain>
    </source>
</reference>
<name>RECA_RHOCA</name>
<protein>
    <recommendedName>
        <fullName evidence="1">Protein RecA</fullName>
    </recommendedName>
    <alternativeName>
        <fullName evidence="1">Recombinase A</fullName>
    </alternativeName>
</protein>
<dbReference type="EMBL" id="X82183">
    <property type="protein sequence ID" value="CAA57673.1"/>
    <property type="molecule type" value="Genomic_DNA"/>
</dbReference>
<dbReference type="PIR" id="S49464">
    <property type="entry name" value="S49464"/>
</dbReference>
<dbReference type="SMR" id="P42447"/>
<dbReference type="GO" id="GO:0005829">
    <property type="term" value="C:cytosol"/>
    <property type="evidence" value="ECO:0007669"/>
    <property type="project" value="TreeGrafter"/>
</dbReference>
<dbReference type="GO" id="GO:0005524">
    <property type="term" value="F:ATP binding"/>
    <property type="evidence" value="ECO:0007669"/>
    <property type="project" value="UniProtKB-UniRule"/>
</dbReference>
<dbReference type="GO" id="GO:0016887">
    <property type="term" value="F:ATP hydrolysis activity"/>
    <property type="evidence" value="ECO:0007669"/>
    <property type="project" value="InterPro"/>
</dbReference>
<dbReference type="GO" id="GO:0140664">
    <property type="term" value="F:ATP-dependent DNA damage sensor activity"/>
    <property type="evidence" value="ECO:0007669"/>
    <property type="project" value="InterPro"/>
</dbReference>
<dbReference type="GO" id="GO:0003684">
    <property type="term" value="F:damaged DNA binding"/>
    <property type="evidence" value="ECO:0007669"/>
    <property type="project" value="UniProtKB-UniRule"/>
</dbReference>
<dbReference type="GO" id="GO:0003697">
    <property type="term" value="F:single-stranded DNA binding"/>
    <property type="evidence" value="ECO:0007669"/>
    <property type="project" value="UniProtKB-UniRule"/>
</dbReference>
<dbReference type="GO" id="GO:0006310">
    <property type="term" value="P:DNA recombination"/>
    <property type="evidence" value="ECO:0007669"/>
    <property type="project" value="UniProtKB-UniRule"/>
</dbReference>
<dbReference type="GO" id="GO:0006281">
    <property type="term" value="P:DNA repair"/>
    <property type="evidence" value="ECO:0007669"/>
    <property type="project" value="UniProtKB-UniRule"/>
</dbReference>
<dbReference type="GO" id="GO:0009432">
    <property type="term" value="P:SOS response"/>
    <property type="evidence" value="ECO:0007669"/>
    <property type="project" value="UniProtKB-UniRule"/>
</dbReference>
<dbReference type="CDD" id="cd00983">
    <property type="entry name" value="RecA"/>
    <property type="match status" value="1"/>
</dbReference>
<dbReference type="FunFam" id="3.40.50.300:FF:000087">
    <property type="entry name" value="Recombinase RecA"/>
    <property type="match status" value="1"/>
</dbReference>
<dbReference type="Gene3D" id="3.40.50.300">
    <property type="entry name" value="P-loop containing nucleotide triphosphate hydrolases"/>
    <property type="match status" value="1"/>
</dbReference>
<dbReference type="HAMAP" id="MF_00268">
    <property type="entry name" value="RecA"/>
    <property type="match status" value="1"/>
</dbReference>
<dbReference type="InterPro" id="IPR003593">
    <property type="entry name" value="AAA+_ATPase"/>
</dbReference>
<dbReference type="InterPro" id="IPR013765">
    <property type="entry name" value="DNA_recomb/repair_RecA"/>
</dbReference>
<dbReference type="InterPro" id="IPR020584">
    <property type="entry name" value="DNA_recomb/repair_RecA_CS"/>
</dbReference>
<dbReference type="InterPro" id="IPR027417">
    <property type="entry name" value="P-loop_NTPase"/>
</dbReference>
<dbReference type="InterPro" id="IPR049261">
    <property type="entry name" value="RecA-like_C"/>
</dbReference>
<dbReference type="InterPro" id="IPR049428">
    <property type="entry name" value="RecA-like_N"/>
</dbReference>
<dbReference type="InterPro" id="IPR020588">
    <property type="entry name" value="RecA_ATP-bd"/>
</dbReference>
<dbReference type="InterPro" id="IPR023400">
    <property type="entry name" value="RecA_C_sf"/>
</dbReference>
<dbReference type="InterPro" id="IPR020587">
    <property type="entry name" value="RecA_monomer-monomer_interface"/>
</dbReference>
<dbReference type="NCBIfam" id="TIGR02012">
    <property type="entry name" value="tigrfam_recA"/>
    <property type="match status" value="1"/>
</dbReference>
<dbReference type="PANTHER" id="PTHR45900:SF1">
    <property type="entry name" value="MITOCHONDRIAL DNA REPAIR PROTEIN RECA HOMOLOG-RELATED"/>
    <property type="match status" value="1"/>
</dbReference>
<dbReference type="PANTHER" id="PTHR45900">
    <property type="entry name" value="RECA"/>
    <property type="match status" value="1"/>
</dbReference>
<dbReference type="Pfam" id="PF00154">
    <property type="entry name" value="RecA"/>
    <property type="match status" value="1"/>
</dbReference>
<dbReference type="Pfam" id="PF21096">
    <property type="entry name" value="RecA_C"/>
    <property type="match status" value="1"/>
</dbReference>
<dbReference type="PRINTS" id="PR00142">
    <property type="entry name" value="RECA"/>
</dbReference>
<dbReference type="SMART" id="SM00382">
    <property type="entry name" value="AAA"/>
    <property type="match status" value="1"/>
</dbReference>
<dbReference type="SUPFAM" id="SSF52540">
    <property type="entry name" value="P-loop containing nucleoside triphosphate hydrolases"/>
    <property type="match status" value="1"/>
</dbReference>
<dbReference type="SUPFAM" id="SSF54752">
    <property type="entry name" value="RecA protein, C-terminal domain"/>
    <property type="match status" value="1"/>
</dbReference>
<dbReference type="PROSITE" id="PS00321">
    <property type="entry name" value="RECA_1"/>
    <property type="match status" value="1"/>
</dbReference>
<dbReference type="PROSITE" id="PS50162">
    <property type="entry name" value="RECA_2"/>
    <property type="match status" value="1"/>
</dbReference>
<dbReference type="PROSITE" id="PS50163">
    <property type="entry name" value="RECA_3"/>
    <property type="match status" value="1"/>
</dbReference>
<keyword id="KW-0067">ATP-binding</keyword>
<keyword id="KW-0963">Cytoplasm</keyword>
<keyword id="KW-0227">DNA damage</keyword>
<keyword id="KW-0233">DNA recombination</keyword>
<keyword id="KW-0234">DNA repair</keyword>
<keyword id="KW-0238">DNA-binding</keyword>
<keyword id="KW-0547">Nucleotide-binding</keyword>
<keyword id="KW-0742">SOS response</keyword>
<gene>
    <name evidence="1" type="primary">recA</name>
</gene>
<accession>P42447</accession>
<proteinExistence type="inferred from homology"/>
<comment type="function">
    <text>Can catalyze the hydrolysis of ATP in the presence of single-stranded DNA, the ATP-dependent uptake of single-stranded DNA by duplex DNA, and the ATP-dependent hybridization of homologous single-stranded DNAs. It interacts with LexA causing its activation and leading to its autocatalytic cleavage.</text>
</comment>
<comment type="subcellular location">
    <subcellularLocation>
        <location evidence="1">Cytoplasm</location>
    </subcellularLocation>
</comment>
<comment type="similarity">
    <text evidence="1">Belongs to the RecA family.</text>
</comment>
<evidence type="ECO:0000255" key="1">
    <source>
        <dbReference type="HAMAP-Rule" id="MF_00268"/>
    </source>
</evidence>
<feature type="chain" id="PRO_0000122817" description="Protein RecA">
    <location>
        <begin position="1"/>
        <end position="355"/>
    </location>
</feature>
<feature type="binding site" evidence="1">
    <location>
        <begin position="78"/>
        <end position="85"/>
    </location>
    <ligand>
        <name>ATP</name>
        <dbReference type="ChEBI" id="CHEBI:30616"/>
    </ligand>
</feature>
<organism>
    <name type="scientific">Rhodobacter capsulatus</name>
    <name type="common">Rhodopseudomonas capsulata</name>
    <dbReference type="NCBI Taxonomy" id="1061"/>
    <lineage>
        <taxon>Bacteria</taxon>
        <taxon>Pseudomonadati</taxon>
        <taxon>Pseudomonadota</taxon>
        <taxon>Alphaproteobacteria</taxon>
        <taxon>Rhodobacterales</taxon>
        <taxon>Rhodobacter group</taxon>
        <taxon>Rhodobacter</taxon>
    </lineage>
</organism>
<sequence>MATTGLFEMNDKGKADKQKALECALAQIERQFGKGSIMKLGGDTPPPEIEATSTGSLGLDIALGIGGLPKGRIVEIYGPESSGKTTLTLHCIAEEQKKGGVCAFVDAEHALDPYYAKKLGVSLEDLLISQPDTGEQALEIVDTLVRSGAVSLVVVDSVAALTPKAEIEGDMGDATVGAQARLMSQAMRKLTASIGRSNCMVIFINQIRMKIGVMFGSPETTSGGNALKFYASVRLDIRRTGAIKDRDEVIGNQTRVKVVKNKVAPPFREVEFDILYGEGISKVGELVDLGVKAGVVAKSGAWYSYGDERIGQGRENAKQFLRDNPDIAYEIEDKIRASHGLEFGVDPTAEDLTEE</sequence>